<proteinExistence type="inferred from homology"/>
<reference key="1">
    <citation type="journal article" date="2006" name="Proc. Natl. Acad. Sci. U.S.A.">
        <title>The partitioned Rhizobium etli genome: genetic and metabolic redundancy in seven interacting replicons.</title>
        <authorList>
            <person name="Gonzalez V."/>
            <person name="Santamaria R.I."/>
            <person name="Bustos P."/>
            <person name="Hernandez-Gonzalez I."/>
            <person name="Medrano-Soto A."/>
            <person name="Moreno-Hagelsieb G."/>
            <person name="Janga S.C."/>
            <person name="Ramirez M.A."/>
            <person name="Jimenez-Jacinto V."/>
            <person name="Collado-Vides J."/>
            <person name="Davila G."/>
        </authorList>
    </citation>
    <scope>NUCLEOTIDE SEQUENCE [LARGE SCALE GENOMIC DNA]</scope>
    <source>
        <strain>ATCC 51251 / DSM 11541 / JCM 21823 / NBRC 15573 / CFN 42</strain>
    </source>
</reference>
<keyword id="KW-0378">Hydrolase</keyword>
<keyword id="KW-0511">Multifunctional enzyme</keyword>
<keyword id="KW-0658">Purine biosynthesis</keyword>
<keyword id="KW-1185">Reference proteome</keyword>
<keyword id="KW-0808">Transferase</keyword>
<comment type="catalytic activity">
    <reaction evidence="1">
        <text>(6R)-10-formyltetrahydrofolate + 5-amino-1-(5-phospho-beta-D-ribosyl)imidazole-4-carboxamide = 5-formamido-1-(5-phospho-D-ribosyl)imidazole-4-carboxamide + (6S)-5,6,7,8-tetrahydrofolate</text>
        <dbReference type="Rhea" id="RHEA:22192"/>
        <dbReference type="ChEBI" id="CHEBI:57453"/>
        <dbReference type="ChEBI" id="CHEBI:58467"/>
        <dbReference type="ChEBI" id="CHEBI:58475"/>
        <dbReference type="ChEBI" id="CHEBI:195366"/>
        <dbReference type="EC" id="2.1.2.3"/>
    </reaction>
</comment>
<comment type="catalytic activity">
    <reaction evidence="1">
        <text>IMP + H2O = 5-formamido-1-(5-phospho-D-ribosyl)imidazole-4-carboxamide</text>
        <dbReference type="Rhea" id="RHEA:18445"/>
        <dbReference type="ChEBI" id="CHEBI:15377"/>
        <dbReference type="ChEBI" id="CHEBI:58053"/>
        <dbReference type="ChEBI" id="CHEBI:58467"/>
        <dbReference type="EC" id="3.5.4.10"/>
    </reaction>
</comment>
<comment type="pathway">
    <text evidence="1">Purine metabolism; IMP biosynthesis via de novo pathway; 5-formamido-1-(5-phospho-D-ribosyl)imidazole-4-carboxamide from 5-amino-1-(5-phospho-D-ribosyl)imidazole-4-carboxamide (10-formyl THF route): step 1/1.</text>
</comment>
<comment type="pathway">
    <text evidence="1">Purine metabolism; IMP biosynthesis via de novo pathway; IMP from 5-formamido-1-(5-phospho-D-ribosyl)imidazole-4-carboxamide: step 1/1.</text>
</comment>
<comment type="domain">
    <text evidence="1">The IMP cyclohydrolase activity resides in the N-terminal region.</text>
</comment>
<comment type="similarity">
    <text evidence="1">Belongs to the PurH family.</text>
</comment>
<dbReference type="EC" id="2.1.2.3" evidence="1"/>
<dbReference type="EC" id="3.5.4.10" evidence="1"/>
<dbReference type="EMBL" id="CP000133">
    <property type="protein sequence ID" value="ABC92850.1"/>
    <property type="molecule type" value="Genomic_DNA"/>
</dbReference>
<dbReference type="RefSeq" id="WP_011427288.1">
    <property type="nucleotide sequence ID" value="NC_007761.1"/>
</dbReference>
<dbReference type="SMR" id="Q2K2T6"/>
<dbReference type="KEGG" id="ret:RHE_CH04107"/>
<dbReference type="eggNOG" id="COG0138">
    <property type="taxonomic scope" value="Bacteria"/>
</dbReference>
<dbReference type="HOGENOM" id="CLU_016316_5_2_5"/>
<dbReference type="OrthoDB" id="9802065at2"/>
<dbReference type="UniPathway" id="UPA00074">
    <property type="reaction ID" value="UER00133"/>
</dbReference>
<dbReference type="UniPathway" id="UPA00074">
    <property type="reaction ID" value="UER00135"/>
</dbReference>
<dbReference type="Proteomes" id="UP000001936">
    <property type="component" value="Chromosome"/>
</dbReference>
<dbReference type="GO" id="GO:0005829">
    <property type="term" value="C:cytosol"/>
    <property type="evidence" value="ECO:0007669"/>
    <property type="project" value="TreeGrafter"/>
</dbReference>
<dbReference type="GO" id="GO:0003937">
    <property type="term" value="F:IMP cyclohydrolase activity"/>
    <property type="evidence" value="ECO:0007669"/>
    <property type="project" value="UniProtKB-UniRule"/>
</dbReference>
<dbReference type="GO" id="GO:0004643">
    <property type="term" value="F:phosphoribosylaminoimidazolecarboxamide formyltransferase activity"/>
    <property type="evidence" value="ECO:0007669"/>
    <property type="project" value="UniProtKB-UniRule"/>
</dbReference>
<dbReference type="GO" id="GO:0006189">
    <property type="term" value="P:'de novo' IMP biosynthetic process"/>
    <property type="evidence" value="ECO:0007669"/>
    <property type="project" value="UniProtKB-UniRule"/>
</dbReference>
<dbReference type="CDD" id="cd01421">
    <property type="entry name" value="IMPCH"/>
    <property type="match status" value="1"/>
</dbReference>
<dbReference type="FunFam" id="3.40.140.20:FF:000001">
    <property type="entry name" value="Bifunctional purine biosynthesis protein PurH"/>
    <property type="match status" value="1"/>
</dbReference>
<dbReference type="FunFam" id="3.40.140.20:FF:000002">
    <property type="entry name" value="Bifunctional purine biosynthesis protein PurH"/>
    <property type="match status" value="1"/>
</dbReference>
<dbReference type="FunFam" id="3.40.50.1380:FF:000001">
    <property type="entry name" value="Bifunctional purine biosynthesis protein PurH"/>
    <property type="match status" value="1"/>
</dbReference>
<dbReference type="Gene3D" id="3.40.140.20">
    <property type="match status" value="2"/>
</dbReference>
<dbReference type="Gene3D" id="3.40.50.1380">
    <property type="entry name" value="Methylglyoxal synthase-like domain"/>
    <property type="match status" value="1"/>
</dbReference>
<dbReference type="HAMAP" id="MF_00139">
    <property type="entry name" value="PurH"/>
    <property type="match status" value="1"/>
</dbReference>
<dbReference type="InterPro" id="IPR024051">
    <property type="entry name" value="AICAR_Tfase_dup_dom_sf"/>
</dbReference>
<dbReference type="InterPro" id="IPR016193">
    <property type="entry name" value="Cytidine_deaminase-like"/>
</dbReference>
<dbReference type="InterPro" id="IPR011607">
    <property type="entry name" value="MGS-like_dom"/>
</dbReference>
<dbReference type="InterPro" id="IPR036914">
    <property type="entry name" value="MGS-like_dom_sf"/>
</dbReference>
<dbReference type="InterPro" id="IPR002695">
    <property type="entry name" value="PurH-like"/>
</dbReference>
<dbReference type="NCBIfam" id="NF002049">
    <property type="entry name" value="PRK00881.1"/>
    <property type="match status" value="1"/>
</dbReference>
<dbReference type="NCBIfam" id="TIGR00355">
    <property type="entry name" value="purH"/>
    <property type="match status" value="1"/>
</dbReference>
<dbReference type="PANTHER" id="PTHR11692:SF0">
    <property type="entry name" value="BIFUNCTIONAL PURINE BIOSYNTHESIS PROTEIN ATIC"/>
    <property type="match status" value="1"/>
</dbReference>
<dbReference type="PANTHER" id="PTHR11692">
    <property type="entry name" value="BIFUNCTIONAL PURINE BIOSYNTHESIS PROTEIN PURH"/>
    <property type="match status" value="1"/>
</dbReference>
<dbReference type="Pfam" id="PF01808">
    <property type="entry name" value="AICARFT_IMPCHas"/>
    <property type="match status" value="1"/>
</dbReference>
<dbReference type="Pfam" id="PF02142">
    <property type="entry name" value="MGS"/>
    <property type="match status" value="1"/>
</dbReference>
<dbReference type="PIRSF" id="PIRSF000414">
    <property type="entry name" value="AICARFT_IMPCHas"/>
    <property type="match status" value="1"/>
</dbReference>
<dbReference type="SMART" id="SM00798">
    <property type="entry name" value="AICARFT_IMPCHas"/>
    <property type="match status" value="1"/>
</dbReference>
<dbReference type="SMART" id="SM00851">
    <property type="entry name" value="MGS"/>
    <property type="match status" value="1"/>
</dbReference>
<dbReference type="SUPFAM" id="SSF53927">
    <property type="entry name" value="Cytidine deaminase-like"/>
    <property type="match status" value="1"/>
</dbReference>
<dbReference type="SUPFAM" id="SSF52335">
    <property type="entry name" value="Methylglyoxal synthase-like"/>
    <property type="match status" value="1"/>
</dbReference>
<dbReference type="PROSITE" id="PS51855">
    <property type="entry name" value="MGS"/>
    <property type="match status" value="1"/>
</dbReference>
<organism>
    <name type="scientific">Rhizobium etli (strain ATCC 51251 / DSM 11541 / JCM 21823 / NBRC 15573 / CFN 42)</name>
    <dbReference type="NCBI Taxonomy" id="347834"/>
    <lineage>
        <taxon>Bacteria</taxon>
        <taxon>Pseudomonadati</taxon>
        <taxon>Pseudomonadota</taxon>
        <taxon>Alphaproteobacteria</taxon>
        <taxon>Hyphomicrobiales</taxon>
        <taxon>Rhizobiaceae</taxon>
        <taxon>Rhizobium/Agrobacterium group</taxon>
        <taxon>Rhizobium</taxon>
    </lineage>
</organism>
<name>PUR9_RHIEC</name>
<protein>
    <recommendedName>
        <fullName evidence="1">Bifunctional purine biosynthesis protein PurH</fullName>
    </recommendedName>
    <domain>
        <recommendedName>
            <fullName evidence="1">Phosphoribosylaminoimidazolecarboxamide formyltransferase</fullName>
            <ecNumber evidence="1">2.1.2.3</ecNumber>
        </recommendedName>
        <alternativeName>
            <fullName evidence="1">AICAR transformylase</fullName>
        </alternativeName>
    </domain>
    <domain>
        <recommendedName>
            <fullName evidence="1">IMP cyclohydrolase</fullName>
            <ecNumber evidence="1">3.5.4.10</ecNumber>
        </recommendedName>
        <alternativeName>
            <fullName evidence="1">ATIC</fullName>
        </alternativeName>
        <alternativeName>
            <fullName evidence="1">IMP synthase</fullName>
        </alternativeName>
        <alternativeName>
            <fullName evidence="1">Inosinicase</fullName>
        </alternativeName>
    </domain>
</protein>
<gene>
    <name evidence="1" type="primary">purH</name>
    <name type="ordered locus">RHE_CH04107</name>
</gene>
<sequence length="538" mass="57150">MAVISKKIPAPDKVEIKTALLSVFDKTGIVELAQALSERGVRLLSTGGTYKAIAAAGLAVTDVSDITGFPEIMDGRVKTLHPTVHGGLLAIRDDNEHQEAMKKHGIEGIDLAVINLYPFEEVRAAGGDYPTTVENIDIGGPAMIRASAKNHAYVTILTDPNDYAEFKEQLSADAGKTAYAFRQRMAAKAYARTAAYDAAISNWFAEALSIDTPRHRVIGGVLKEEMRYGENPHQRAAFYVTGEKRPGVSTAVLLQGKQLSYNNINDTDAAYELVAEFLPERAPACAIIKHANPCGVATGSSLIEAYQRALACDSVSAFGGIIALNQILDAETAEEIVKLFTEVIIAPDVTEEAKAIVARKPNLRLLSAGGLPDPRVAGLTAKTVSGGLLVQSRDNGMVEDLELKVVTRRAPTGQELEDMKFAFKVGKHVKSNAVVYAKDGQTAGIGAGQMSRVDSARIAALKAEEAAKALGLAVPMTKGSAVASEAFLPFADGLLSMIAAGATAVIQPGGSMRDQEVIDAANEHGIAMVFTGMRHFRH</sequence>
<feature type="chain" id="PRO_1000018947" description="Bifunctional purine biosynthesis protein PurH">
    <location>
        <begin position="1"/>
        <end position="538"/>
    </location>
</feature>
<feature type="domain" description="MGS-like" evidence="2">
    <location>
        <begin position="8"/>
        <end position="158"/>
    </location>
</feature>
<evidence type="ECO:0000255" key="1">
    <source>
        <dbReference type="HAMAP-Rule" id="MF_00139"/>
    </source>
</evidence>
<evidence type="ECO:0000255" key="2">
    <source>
        <dbReference type="PROSITE-ProRule" id="PRU01202"/>
    </source>
</evidence>
<accession>Q2K2T6</accession>